<feature type="chain" id="PRO_0000436366" description="Probable NADPH-dependent quinone reductase tdiC">
    <location>
        <begin position="1"/>
        <end position="355"/>
    </location>
</feature>
<dbReference type="EC" id="1.1.1.-" evidence="9"/>
<dbReference type="EMBL" id="EF550583">
    <property type="protein sequence ID" value="ABU51604.1"/>
    <property type="molecule type" value="mRNA"/>
</dbReference>
<dbReference type="EMBL" id="BN001305">
    <property type="protein sequence ID" value="CBF80714.1"/>
    <property type="molecule type" value="Genomic_DNA"/>
</dbReference>
<dbReference type="EMBL" id="AACD01000154">
    <property type="protein sequence ID" value="EAA66859.1"/>
    <property type="molecule type" value="Genomic_DNA"/>
</dbReference>
<dbReference type="EMBL" id="AACD01000155">
    <property type="protein sequence ID" value="EAA66871.1"/>
    <property type="molecule type" value="Genomic_DNA"/>
</dbReference>
<dbReference type="RefSeq" id="XP_681784.1">
    <property type="nucleotide sequence ID" value="XM_676692.1"/>
</dbReference>
<dbReference type="RefSeq" id="XP_681787.1">
    <property type="nucleotide sequence ID" value="XM_676695.1"/>
</dbReference>
<dbReference type="SMR" id="A7XRY6"/>
<dbReference type="STRING" id="227321.A7XRY6"/>
<dbReference type="EnsemblFungi" id="CBF80714">
    <property type="protein sequence ID" value="CBF80714"/>
    <property type="gene ID" value="ANIA_08518"/>
</dbReference>
<dbReference type="KEGG" id="ani:ANIA_08518"/>
<dbReference type="VEuPathDB" id="FungiDB:AN8518"/>
<dbReference type="eggNOG" id="ENOG502SIN0">
    <property type="taxonomic scope" value="Eukaryota"/>
</dbReference>
<dbReference type="InParanoid" id="A7XRY6"/>
<dbReference type="OMA" id="VQYVHIG"/>
<dbReference type="OrthoDB" id="809632at2759"/>
<dbReference type="BioCyc" id="MetaCyc:MONOMER-18729"/>
<dbReference type="Proteomes" id="UP000000560">
    <property type="component" value="Chromosome V"/>
</dbReference>
<dbReference type="GO" id="GO:0016491">
    <property type="term" value="F:oxidoreductase activity"/>
    <property type="evidence" value="ECO:0000315"/>
    <property type="project" value="UniProt"/>
</dbReference>
<dbReference type="GO" id="GO:0044550">
    <property type="term" value="P:secondary metabolite biosynthetic process"/>
    <property type="evidence" value="ECO:0000314"/>
    <property type="project" value="AspGD"/>
</dbReference>
<dbReference type="GO" id="GO:1900796">
    <property type="term" value="P:terrequinone A biosynthetic process"/>
    <property type="evidence" value="ECO:0000315"/>
    <property type="project" value="UniProt"/>
</dbReference>
<dbReference type="Gene3D" id="3.40.50.720">
    <property type="entry name" value="NAD(P)-binding Rossmann-like Domain"/>
    <property type="match status" value="1"/>
</dbReference>
<dbReference type="InterPro" id="IPR011032">
    <property type="entry name" value="GroES-like_sf"/>
</dbReference>
<dbReference type="InterPro" id="IPR036291">
    <property type="entry name" value="NAD(P)-bd_dom_sf"/>
</dbReference>
<dbReference type="InterPro" id="IPR051397">
    <property type="entry name" value="Zn-ADH-like_protein"/>
</dbReference>
<dbReference type="PANTHER" id="PTHR43677">
    <property type="entry name" value="SHORT-CHAIN DEHYDROGENASE/REDUCTASE"/>
    <property type="match status" value="1"/>
</dbReference>
<dbReference type="PANTHER" id="PTHR43677:SF11">
    <property type="entry name" value="ZINC-CONTAINING ALCOHOL DEHYDROGENASE"/>
    <property type="match status" value="1"/>
</dbReference>
<dbReference type="SUPFAM" id="SSF50129">
    <property type="entry name" value="GroES-like"/>
    <property type="match status" value="1"/>
</dbReference>
<dbReference type="SUPFAM" id="SSF51735">
    <property type="entry name" value="NAD(P)-binding Rossmann-fold domains"/>
    <property type="match status" value="1"/>
</dbReference>
<evidence type="ECO:0000269" key="1">
    <source>
    </source>
</evidence>
<evidence type="ECO:0000269" key="2">
    <source>
    </source>
</evidence>
<evidence type="ECO:0000269" key="3">
    <source>
    </source>
</evidence>
<evidence type="ECO:0000269" key="4">
    <source>
    </source>
</evidence>
<evidence type="ECO:0000269" key="5">
    <source>
    </source>
</evidence>
<evidence type="ECO:0000269" key="6">
    <source>
    </source>
</evidence>
<evidence type="ECO:0000303" key="7">
    <source>
    </source>
</evidence>
<evidence type="ECO:0000305" key="8"/>
<evidence type="ECO:0000305" key="9">
    <source>
    </source>
</evidence>
<comment type="function">
    <text evidence="1 2 3 4 5">Probable NADPH-dependent quinone reductase; part of the gene cluster that mediates the biosynthesis of terrequinone A, an antitumor agent (PubMed:16426969, PubMed:17291795, PubMed:17704773, PubMed:22083274). The first step in the biosynthetic pathway for terrequinone A is formation of indole pyruvic acid (IPA) from L-tryptophan by the aminotransferase tdiD (PubMed:17704773). The nonribosomal peptide synthase tdiA then immediately converts unstable IPA to didemethylasterriquinone D (DDAQ D), via condensation of 2 IPA molecules (PubMed:17704773). The symmetric connectivity of the 2 IPA molecules is thought to arise by head-to-tail dual Claisen condensations facilitated by the TE domain (PubMed:17704773). TdiB then catalyzes reverse prenylation by transferring dimethylallyl diphosphate to carbon atom 2' of DDAQ D, to yield asterriquinone C-1 (PubMed:18029206). Finally, tdiC and tdiE enzymes robustly convert asterriquinone C-1 to terrequinone A via a transformation involving regular prenylation at carbon atom 5, which requires elimination of the hydroxy group on C-5 (PubMed:17704773, PubMed:18029206).</text>
</comment>
<comment type="cofactor">
    <cofactor evidence="8">
        <name>NADPH</name>
        <dbReference type="ChEBI" id="CHEBI:57783"/>
    </cofactor>
</comment>
<comment type="pathway">
    <text evidence="2 3">Secondary metabolite biosynthesis.</text>
</comment>
<comment type="induction">
    <text evidence="1 2 6">Expressed during both sexual and asexual development (PubMed:26773375). Expression is positively regulated by the secondary metabolism regulator laeA (PubMed:16426969, PubMed:17291795).</text>
</comment>
<comment type="similarity">
    <text evidence="8">Belongs to the zinc-containing alcohol dehydrogenase family.</text>
</comment>
<organism>
    <name type="scientific">Emericella nidulans (strain FGSC A4 / ATCC 38163 / CBS 112.46 / NRRL 194 / M139)</name>
    <name type="common">Aspergillus nidulans</name>
    <dbReference type="NCBI Taxonomy" id="227321"/>
    <lineage>
        <taxon>Eukaryota</taxon>
        <taxon>Fungi</taxon>
        <taxon>Dikarya</taxon>
        <taxon>Ascomycota</taxon>
        <taxon>Pezizomycotina</taxon>
        <taxon>Eurotiomycetes</taxon>
        <taxon>Eurotiomycetidae</taxon>
        <taxon>Eurotiales</taxon>
        <taxon>Aspergillaceae</taxon>
        <taxon>Aspergillus</taxon>
        <taxon>Aspergillus subgen. Nidulantes</taxon>
    </lineage>
</organism>
<protein>
    <recommendedName>
        <fullName evidence="8">Probable NADPH-dependent quinone reductase tdiC</fullName>
        <ecNumber evidence="9">1.1.1.-</ecNumber>
    </recommendedName>
    <alternativeName>
        <fullName evidence="7">Terrequinone biosynthesis protein C</fullName>
    </alternativeName>
</protein>
<sequence length="355" mass="37620">MHAALVPTWSSPCPIYTEIPDPGPPPPEQLQLKVLAVGIPRVVRLRARGIHPTAKSASLPYDPSIDGVGIDEQTGIMYYILPLSASCLAEKVNVDRDNLVPLQPGAPKPQPRNGPENGYGIALGDAADHRAETLDPIAIAGLVNPVSSSWMALRTRVDGEITGKTVLVLGATSKSGRAAVLVARFLGANKVIGVARREEGLRSVEGLDGWVTSGDMLPGETGVRFALPDWVGPVHIVLDYVGGSVAAGVLGSAEIEEGRELQYVQVGNLALELGTGEKHMFETLPGHLISRKPICIRGSGMGSFSRRDLVREMPGLVAFLARMKAPFGIASAPMCEVASVWQDEDTKGSRVVIVP</sequence>
<name>TDIC_EMENI</name>
<gene>
    <name evidence="7" type="primary">tdiC</name>
    <name type="ORF">AN8515</name>
</gene>
<reference key="1">
    <citation type="journal article" date="2007" name="Nat. Chem. Biol.">
        <title>Terrequinone A biosynthesis through L-tryptophan oxidation, dimerization and bisprenylation.</title>
        <authorList>
            <person name="Balibar C.J."/>
            <person name="Howard-Jones A.R."/>
            <person name="Walsh C.T."/>
        </authorList>
    </citation>
    <scope>NUCLEOTIDE SEQUENCE [MRNA]</scope>
    <source>
        <strain>FGSC A4 / ATCC 38163 / CBS 112.46 / NRRL 194 / M139</strain>
    </source>
</reference>
<reference key="2">
    <citation type="journal article" date="2005" name="Nature">
        <title>Sequencing of Aspergillus nidulans and comparative analysis with A. fumigatus and A. oryzae.</title>
        <authorList>
            <person name="Galagan J.E."/>
            <person name="Calvo S.E."/>
            <person name="Cuomo C."/>
            <person name="Ma L.-J."/>
            <person name="Wortman J.R."/>
            <person name="Batzoglou S."/>
            <person name="Lee S.-I."/>
            <person name="Bastuerkmen M."/>
            <person name="Spevak C.C."/>
            <person name="Clutterbuck J."/>
            <person name="Kapitonov V."/>
            <person name="Jurka J."/>
            <person name="Scazzocchio C."/>
            <person name="Farman M.L."/>
            <person name="Butler J."/>
            <person name="Purcell S."/>
            <person name="Harris S."/>
            <person name="Braus G.H."/>
            <person name="Draht O."/>
            <person name="Busch S."/>
            <person name="D'Enfert C."/>
            <person name="Bouchier C."/>
            <person name="Goldman G.H."/>
            <person name="Bell-Pedersen D."/>
            <person name="Griffiths-Jones S."/>
            <person name="Doonan J.H."/>
            <person name="Yu J."/>
            <person name="Vienken K."/>
            <person name="Pain A."/>
            <person name="Freitag M."/>
            <person name="Selker E.U."/>
            <person name="Archer D.B."/>
            <person name="Penalva M.A."/>
            <person name="Oakley B.R."/>
            <person name="Momany M."/>
            <person name="Tanaka T."/>
            <person name="Kumagai T."/>
            <person name="Asai K."/>
            <person name="Machida M."/>
            <person name="Nierman W.C."/>
            <person name="Denning D.W."/>
            <person name="Caddick M.X."/>
            <person name="Hynes M."/>
            <person name="Paoletti M."/>
            <person name="Fischer R."/>
            <person name="Miller B.L."/>
            <person name="Dyer P.S."/>
            <person name="Sachs M.S."/>
            <person name="Osmani S.A."/>
            <person name="Birren B.W."/>
        </authorList>
    </citation>
    <scope>NUCLEOTIDE SEQUENCE [LARGE SCALE GENOMIC DNA]</scope>
    <source>
        <strain>FGSC A4 / ATCC 38163 / CBS 112.46 / NRRL 194 / M139</strain>
    </source>
</reference>
<reference key="3">
    <citation type="journal article" date="2009" name="Fungal Genet. Biol.">
        <title>The 2008 update of the Aspergillus nidulans genome annotation: a community effort.</title>
        <authorList>
            <person name="Wortman J.R."/>
            <person name="Gilsenan J.M."/>
            <person name="Joardar V."/>
            <person name="Deegan J."/>
            <person name="Clutterbuck J."/>
            <person name="Andersen M.R."/>
            <person name="Archer D."/>
            <person name="Bencina M."/>
            <person name="Braus G."/>
            <person name="Coutinho P."/>
            <person name="von Dohren H."/>
            <person name="Doonan J."/>
            <person name="Driessen A.J."/>
            <person name="Durek P."/>
            <person name="Espeso E."/>
            <person name="Fekete E."/>
            <person name="Flipphi M."/>
            <person name="Estrada C.G."/>
            <person name="Geysens S."/>
            <person name="Goldman G."/>
            <person name="de Groot P.W."/>
            <person name="Hansen K."/>
            <person name="Harris S.D."/>
            <person name="Heinekamp T."/>
            <person name="Helmstaedt K."/>
            <person name="Henrissat B."/>
            <person name="Hofmann G."/>
            <person name="Homan T."/>
            <person name="Horio T."/>
            <person name="Horiuchi H."/>
            <person name="James S."/>
            <person name="Jones M."/>
            <person name="Karaffa L."/>
            <person name="Karanyi Z."/>
            <person name="Kato M."/>
            <person name="Keller N."/>
            <person name="Kelly D.E."/>
            <person name="Kiel J.A."/>
            <person name="Kim J.M."/>
            <person name="van der Klei I.J."/>
            <person name="Klis F.M."/>
            <person name="Kovalchuk A."/>
            <person name="Krasevec N."/>
            <person name="Kubicek C.P."/>
            <person name="Liu B."/>
            <person name="Maccabe A."/>
            <person name="Meyer V."/>
            <person name="Mirabito P."/>
            <person name="Miskei M."/>
            <person name="Mos M."/>
            <person name="Mullins J."/>
            <person name="Nelson D.R."/>
            <person name="Nielsen J."/>
            <person name="Oakley B.R."/>
            <person name="Osmani S.A."/>
            <person name="Pakula T."/>
            <person name="Paszewski A."/>
            <person name="Paulsen I."/>
            <person name="Pilsyk S."/>
            <person name="Pocsi I."/>
            <person name="Punt P.J."/>
            <person name="Ram A.F."/>
            <person name="Ren Q."/>
            <person name="Robellet X."/>
            <person name="Robson G."/>
            <person name="Seiboth B."/>
            <person name="van Solingen P."/>
            <person name="Specht T."/>
            <person name="Sun J."/>
            <person name="Taheri-Talesh N."/>
            <person name="Takeshita N."/>
            <person name="Ussery D."/>
            <person name="vanKuyk P.A."/>
            <person name="Visser H."/>
            <person name="van de Vondervoort P.J."/>
            <person name="de Vries R.P."/>
            <person name="Walton J."/>
            <person name="Xiang X."/>
            <person name="Xiong Y."/>
            <person name="Zeng A.P."/>
            <person name="Brandt B.W."/>
            <person name="Cornell M.J."/>
            <person name="van den Hondel C.A."/>
            <person name="Visser J."/>
            <person name="Oliver S.G."/>
            <person name="Turner G."/>
        </authorList>
    </citation>
    <scope>GENOME REANNOTATION</scope>
    <source>
        <strain>FGSC A4 / ATCC 38163 / CBS 112.46 / NRRL 194 / M139</strain>
    </source>
</reference>
<reference key="4">
    <citation type="journal article" date="2006" name="Chem. Biol.">
        <title>Genomic mining for Aspergillus natural products.</title>
        <authorList>
            <person name="Bok J.W."/>
            <person name="Hoffmeister D."/>
            <person name="Maggio-Hall L.A."/>
            <person name="Murillo R."/>
            <person name="Glasner J.D."/>
            <person name="Keller N.P."/>
        </authorList>
    </citation>
    <scope>IDENTIFICATION</scope>
    <scope>INDUCTION</scope>
</reference>
<reference key="5">
    <citation type="journal article" date="2007" name="Fungal Genet. Biol.">
        <title>Accurate prediction of the Aspergillus nidulans terrequinone gene cluster boundaries using the transcriptional regulator LaeA.</title>
        <authorList>
            <person name="Bouhired S."/>
            <person name="Weber M."/>
            <person name="Kempf-Sontag A."/>
            <person name="Keller N.P."/>
            <person name="Hoffmeister D."/>
        </authorList>
    </citation>
    <scope>IDENTIFICATION</scope>
    <scope>INDUCTION</scope>
    <scope>FUNCTION</scope>
</reference>
<reference key="6">
    <citation type="journal article" date="2008" name="Fungal Genet. Biol.">
        <title>The Aspergillus nidulans enzyme TdiB catalyzes prenyltransfer to the precursor of bioactive asterriquinones.</title>
        <authorList>
            <person name="Schneider P."/>
            <person name="Weber M."/>
            <person name="Hoffmeister D."/>
        </authorList>
    </citation>
    <scope>FUNCTION</scope>
</reference>
<reference key="7">
    <citation type="journal article" date="2012" name="Appl. Microbiol. Biotechnol.">
        <title>Heterologous expression system in Aspergillus oryzae for fungal biosynthetic gene clusters of secondary metabolites.</title>
        <authorList>
            <person name="Sakai K."/>
            <person name="Kinoshita H."/>
            <person name="Nihira T."/>
        </authorList>
    </citation>
    <scope>FUNCTION</scope>
</reference>
<reference key="8">
    <citation type="journal article" date="2016" name="Fungal Genet. Biol.">
        <title>Changes of global gene expression and secondary metabolite accumulation during light-dependent Aspergillus nidulans development.</title>
        <authorList>
            <person name="Bayram O."/>
            <person name="Feussner K."/>
            <person name="Dumkow M."/>
            <person name="Herrfurth C."/>
            <person name="Feussner I."/>
            <person name="Braus G.H."/>
        </authorList>
    </citation>
    <scope>INDUCTION</scope>
</reference>
<accession>A7XRY6</accession>
<accession>C8VEN4</accession>
<accession>Q5AT62</accession>
<proteinExistence type="evidence at transcript level"/>
<keyword id="KW-0521">NADP</keyword>
<keyword id="KW-0560">Oxidoreductase</keyword>
<keyword id="KW-1185">Reference proteome</keyword>